<protein>
    <recommendedName>
        <fullName evidence="1">Bifunctional protein FolD</fullName>
    </recommendedName>
    <domain>
        <recommendedName>
            <fullName evidence="1">Methylenetetrahydrofolate dehydrogenase</fullName>
            <ecNumber evidence="1">1.5.1.5</ecNumber>
        </recommendedName>
    </domain>
    <domain>
        <recommendedName>
            <fullName evidence="1">Methenyltetrahydrofolate cyclohydrolase</fullName>
            <ecNumber evidence="1">3.5.4.9</ecNumber>
        </recommendedName>
    </domain>
</protein>
<sequence length="295" mass="31669">MLIIDGKKVSLDMKEELKASVESYRSITGKVPGLTVIIVGSDPASEVYVRNKAKTCKEVGMNSSVIELQEDTPEAHLLEVIDSLNRDPAVHGILVQQPLPKQIDEFAVTLAIDPAKDVDGFHPENLGRLVMGHLDKCFVSCTPYGILELIGRYGIETSGKHCVVIGRSNIVGKPMANLMMQKLKESNCTVTVCHSATKDIASYTRQADILIAAIGRAKFVTADMVKQGAVVIDVGINRIEDPTTKSGTRLVGDVDYEGVSAKAAAMTPVPGGVGPMTIAMLLKNTLHSFERANGL</sequence>
<name>FOLD_CHLL3</name>
<accession>Q3B4E2</accession>
<feature type="chain" id="PRO_0000268429" description="Bifunctional protein FolD">
    <location>
        <begin position="1"/>
        <end position="295"/>
    </location>
</feature>
<feature type="binding site" evidence="1">
    <location>
        <begin position="166"/>
        <end position="168"/>
    </location>
    <ligand>
        <name>NADP(+)</name>
        <dbReference type="ChEBI" id="CHEBI:58349"/>
    </ligand>
</feature>
<feature type="binding site" evidence="1">
    <location>
        <position position="195"/>
    </location>
    <ligand>
        <name>NADP(+)</name>
        <dbReference type="ChEBI" id="CHEBI:58349"/>
    </ligand>
</feature>
<feature type="binding site" evidence="1">
    <location>
        <position position="236"/>
    </location>
    <ligand>
        <name>NADP(+)</name>
        <dbReference type="ChEBI" id="CHEBI:58349"/>
    </ligand>
</feature>
<reference key="1">
    <citation type="submission" date="2005-08" db="EMBL/GenBank/DDBJ databases">
        <title>Complete sequence of Pelodictyon luteolum DSM 273.</title>
        <authorList>
            <consortium name="US DOE Joint Genome Institute"/>
            <person name="Copeland A."/>
            <person name="Lucas S."/>
            <person name="Lapidus A."/>
            <person name="Barry K."/>
            <person name="Detter J.C."/>
            <person name="Glavina T."/>
            <person name="Hammon N."/>
            <person name="Israni S."/>
            <person name="Pitluck S."/>
            <person name="Bryant D."/>
            <person name="Schmutz J."/>
            <person name="Larimer F."/>
            <person name="Land M."/>
            <person name="Kyrpides N."/>
            <person name="Ivanova N."/>
            <person name="Richardson P."/>
        </authorList>
    </citation>
    <scope>NUCLEOTIDE SEQUENCE [LARGE SCALE GENOMIC DNA]</scope>
    <source>
        <strain>DSM 273 / BCRC 81028 / 2530</strain>
    </source>
</reference>
<dbReference type="EC" id="1.5.1.5" evidence="1"/>
<dbReference type="EC" id="3.5.4.9" evidence="1"/>
<dbReference type="EMBL" id="CP000096">
    <property type="protein sequence ID" value="ABB23789.1"/>
    <property type="status" value="ALT_INIT"/>
    <property type="molecule type" value="Genomic_DNA"/>
</dbReference>
<dbReference type="RefSeq" id="WP_041463811.1">
    <property type="nucleotide sequence ID" value="NC_007512.1"/>
</dbReference>
<dbReference type="SMR" id="Q3B4E2"/>
<dbReference type="STRING" id="319225.Plut_0927"/>
<dbReference type="KEGG" id="plt:Plut_0927"/>
<dbReference type="eggNOG" id="COG0190">
    <property type="taxonomic scope" value="Bacteria"/>
</dbReference>
<dbReference type="HOGENOM" id="CLU_034045_2_1_10"/>
<dbReference type="OrthoDB" id="9803580at2"/>
<dbReference type="UniPathway" id="UPA00193"/>
<dbReference type="Proteomes" id="UP000002709">
    <property type="component" value="Chromosome"/>
</dbReference>
<dbReference type="GO" id="GO:0005829">
    <property type="term" value="C:cytosol"/>
    <property type="evidence" value="ECO:0007669"/>
    <property type="project" value="TreeGrafter"/>
</dbReference>
<dbReference type="GO" id="GO:0004477">
    <property type="term" value="F:methenyltetrahydrofolate cyclohydrolase activity"/>
    <property type="evidence" value="ECO:0007669"/>
    <property type="project" value="UniProtKB-UniRule"/>
</dbReference>
<dbReference type="GO" id="GO:0004488">
    <property type="term" value="F:methylenetetrahydrofolate dehydrogenase (NADP+) activity"/>
    <property type="evidence" value="ECO:0007669"/>
    <property type="project" value="UniProtKB-UniRule"/>
</dbReference>
<dbReference type="GO" id="GO:0000105">
    <property type="term" value="P:L-histidine biosynthetic process"/>
    <property type="evidence" value="ECO:0007669"/>
    <property type="project" value="UniProtKB-KW"/>
</dbReference>
<dbReference type="GO" id="GO:0009086">
    <property type="term" value="P:methionine biosynthetic process"/>
    <property type="evidence" value="ECO:0007669"/>
    <property type="project" value="UniProtKB-KW"/>
</dbReference>
<dbReference type="GO" id="GO:0006164">
    <property type="term" value="P:purine nucleotide biosynthetic process"/>
    <property type="evidence" value="ECO:0007669"/>
    <property type="project" value="UniProtKB-KW"/>
</dbReference>
<dbReference type="GO" id="GO:0035999">
    <property type="term" value="P:tetrahydrofolate interconversion"/>
    <property type="evidence" value="ECO:0007669"/>
    <property type="project" value="UniProtKB-UniRule"/>
</dbReference>
<dbReference type="CDD" id="cd01080">
    <property type="entry name" value="NAD_bind_m-THF_DH_Cyclohyd"/>
    <property type="match status" value="1"/>
</dbReference>
<dbReference type="FunFam" id="3.40.50.720:FF:000189">
    <property type="entry name" value="Bifunctional protein FolD"/>
    <property type="match status" value="1"/>
</dbReference>
<dbReference type="FunFam" id="3.40.50.10860:FF:000005">
    <property type="entry name" value="C-1-tetrahydrofolate synthase, cytoplasmic, putative"/>
    <property type="match status" value="1"/>
</dbReference>
<dbReference type="Gene3D" id="3.40.50.10860">
    <property type="entry name" value="Leucine Dehydrogenase, chain A, domain 1"/>
    <property type="match status" value="1"/>
</dbReference>
<dbReference type="Gene3D" id="3.40.50.720">
    <property type="entry name" value="NAD(P)-binding Rossmann-like Domain"/>
    <property type="match status" value="1"/>
</dbReference>
<dbReference type="HAMAP" id="MF_01576">
    <property type="entry name" value="THF_DHG_CYH"/>
    <property type="match status" value="1"/>
</dbReference>
<dbReference type="InterPro" id="IPR046346">
    <property type="entry name" value="Aminoacid_DH-like_N_sf"/>
</dbReference>
<dbReference type="InterPro" id="IPR036291">
    <property type="entry name" value="NAD(P)-bd_dom_sf"/>
</dbReference>
<dbReference type="InterPro" id="IPR000672">
    <property type="entry name" value="THF_DH/CycHdrlase"/>
</dbReference>
<dbReference type="InterPro" id="IPR020630">
    <property type="entry name" value="THF_DH/CycHdrlase_cat_dom"/>
</dbReference>
<dbReference type="InterPro" id="IPR020867">
    <property type="entry name" value="THF_DH/CycHdrlase_CS"/>
</dbReference>
<dbReference type="InterPro" id="IPR020631">
    <property type="entry name" value="THF_DH/CycHdrlase_NAD-bd_dom"/>
</dbReference>
<dbReference type="NCBIfam" id="NF010771">
    <property type="entry name" value="PRK14174.1"/>
    <property type="match status" value="1"/>
</dbReference>
<dbReference type="NCBIfam" id="NF010783">
    <property type="entry name" value="PRK14186.1"/>
    <property type="match status" value="1"/>
</dbReference>
<dbReference type="PANTHER" id="PTHR48099:SF5">
    <property type="entry name" value="C-1-TETRAHYDROFOLATE SYNTHASE, CYTOPLASMIC"/>
    <property type="match status" value="1"/>
</dbReference>
<dbReference type="PANTHER" id="PTHR48099">
    <property type="entry name" value="C-1-TETRAHYDROFOLATE SYNTHASE, CYTOPLASMIC-RELATED"/>
    <property type="match status" value="1"/>
</dbReference>
<dbReference type="Pfam" id="PF00763">
    <property type="entry name" value="THF_DHG_CYH"/>
    <property type="match status" value="1"/>
</dbReference>
<dbReference type="Pfam" id="PF02882">
    <property type="entry name" value="THF_DHG_CYH_C"/>
    <property type="match status" value="1"/>
</dbReference>
<dbReference type="PRINTS" id="PR00085">
    <property type="entry name" value="THFDHDRGNASE"/>
</dbReference>
<dbReference type="SUPFAM" id="SSF53223">
    <property type="entry name" value="Aminoacid dehydrogenase-like, N-terminal domain"/>
    <property type="match status" value="1"/>
</dbReference>
<dbReference type="SUPFAM" id="SSF51735">
    <property type="entry name" value="NAD(P)-binding Rossmann-fold domains"/>
    <property type="match status" value="1"/>
</dbReference>
<dbReference type="PROSITE" id="PS00767">
    <property type="entry name" value="THF_DHG_CYH_2"/>
    <property type="match status" value="1"/>
</dbReference>
<proteinExistence type="inferred from homology"/>
<evidence type="ECO:0000255" key="1">
    <source>
        <dbReference type="HAMAP-Rule" id="MF_01576"/>
    </source>
</evidence>
<evidence type="ECO:0000305" key="2"/>
<keyword id="KW-0028">Amino-acid biosynthesis</keyword>
<keyword id="KW-0368">Histidine biosynthesis</keyword>
<keyword id="KW-0378">Hydrolase</keyword>
<keyword id="KW-0486">Methionine biosynthesis</keyword>
<keyword id="KW-0511">Multifunctional enzyme</keyword>
<keyword id="KW-0521">NADP</keyword>
<keyword id="KW-0554">One-carbon metabolism</keyword>
<keyword id="KW-0560">Oxidoreductase</keyword>
<keyword id="KW-0658">Purine biosynthesis</keyword>
<keyword id="KW-1185">Reference proteome</keyword>
<gene>
    <name evidence="1" type="primary">folD</name>
    <name type="ordered locus">Plut_0927</name>
</gene>
<comment type="function">
    <text evidence="1">Catalyzes the oxidation of 5,10-methylenetetrahydrofolate to 5,10-methenyltetrahydrofolate and then the hydrolysis of 5,10-methenyltetrahydrofolate to 10-formyltetrahydrofolate.</text>
</comment>
<comment type="catalytic activity">
    <reaction evidence="1">
        <text>(6R)-5,10-methylene-5,6,7,8-tetrahydrofolate + NADP(+) = (6R)-5,10-methenyltetrahydrofolate + NADPH</text>
        <dbReference type="Rhea" id="RHEA:22812"/>
        <dbReference type="ChEBI" id="CHEBI:15636"/>
        <dbReference type="ChEBI" id="CHEBI:57455"/>
        <dbReference type="ChEBI" id="CHEBI:57783"/>
        <dbReference type="ChEBI" id="CHEBI:58349"/>
        <dbReference type="EC" id="1.5.1.5"/>
    </reaction>
</comment>
<comment type="catalytic activity">
    <reaction evidence="1">
        <text>(6R)-5,10-methenyltetrahydrofolate + H2O = (6R)-10-formyltetrahydrofolate + H(+)</text>
        <dbReference type="Rhea" id="RHEA:23700"/>
        <dbReference type="ChEBI" id="CHEBI:15377"/>
        <dbReference type="ChEBI" id="CHEBI:15378"/>
        <dbReference type="ChEBI" id="CHEBI:57455"/>
        <dbReference type="ChEBI" id="CHEBI:195366"/>
        <dbReference type="EC" id="3.5.4.9"/>
    </reaction>
</comment>
<comment type="pathway">
    <text evidence="1">One-carbon metabolism; tetrahydrofolate interconversion.</text>
</comment>
<comment type="subunit">
    <text evidence="1">Homodimer.</text>
</comment>
<comment type="similarity">
    <text evidence="1">Belongs to the tetrahydrofolate dehydrogenase/cyclohydrolase family.</text>
</comment>
<comment type="sequence caution" evidence="2">
    <conflict type="erroneous initiation">
        <sequence resource="EMBL-CDS" id="ABB23789"/>
    </conflict>
</comment>
<organism>
    <name type="scientific">Chlorobium luteolum (strain DSM 273 / BCRC 81028 / 2530)</name>
    <name type="common">Pelodictyon luteolum</name>
    <dbReference type="NCBI Taxonomy" id="319225"/>
    <lineage>
        <taxon>Bacteria</taxon>
        <taxon>Pseudomonadati</taxon>
        <taxon>Chlorobiota</taxon>
        <taxon>Chlorobiia</taxon>
        <taxon>Chlorobiales</taxon>
        <taxon>Chlorobiaceae</taxon>
        <taxon>Chlorobium/Pelodictyon group</taxon>
        <taxon>Pelodictyon</taxon>
    </lineage>
</organism>